<accession>Q1ZXS5</accession>
<accession>A8JJR1</accession>
<accession>Q9XUQ4</accession>
<organism evidence="11">
    <name type="scientific">Caenorhabditis elegans</name>
    <dbReference type="NCBI Taxonomy" id="6239"/>
    <lineage>
        <taxon>Eukaryota</taxon>
        <taxon>Metazoa</taxon>
        <taxon>Ecdysozoa</taxon>
        <taxon>Nematoda</taxon>
        <taxon>Chromadorea</taxon>
        <taxon>Rhabditida</taxon>
        <taxon>Rhabditina</taxon>
        <taxon>Rhabditomorpha</taxon>
        <taxon>Rhabditoidea</taxon>
        <taxon>Rhabditidae</taxon>
        <taxon>Peloderinae</taxon>
        <taxon>Caenorhabditis</taxon>
    </lineage>
</organism>
<proteinExistence type="evidence at protein level"/>
<evidence type="ECO:0000250" key="1">
    <source>
        <dbReference type="UniProtKB" id="Q96JC1"/>
    </source>
</evidence>
<evidence type="ECO:0000255" key="2">
    <source>
        <dbReference type="PROSITE-ProRule" id="PRU00795"/>
    </source>
</evidence>
<evidence type="ECO:0000255" key="3">
    <source>
        <dbReference type="PROSITE-ProRule" id="PRU01006"/>
    </source>
</evidence>
<evidence type="ECO:0000269" key="4">
    <source>
    </source>
</evidence>
<evidence type="ECO:0000269" key="5">
    <source>
    </source>
</evidence>
<evidence type="ECO:0000269" key="6">
    <source>
    </source>
</evidence>
<evidence type="ECO:0000269" key="7">
    <source>
    </source>
</evidence>
<evidence type="ECO:0000269" key="8">
    <source>
    </source>
</evidence>
<evidence type="ECO:0000305" key="9"/>
<evidence type="ECO:0000305" key="10">
    <source>
    </source>
</evidence>
<evidence type="ECO:0000312" key="11">
    <source>
        <dbReference type="Proteomes" id="UP000001940"/>
    </source>
</evidence>
<evidence type="ECO:0000312" key="12">
    <source>
        <dbReference type="WormBase" id="T08G5.5a"/>
    </source>
</evidence>
<evidence type="ECO:0000312" key="13">
    <source>
        <dbReference type="WormBase" id="T08G5.5b"/>
    </source>
</evidence>
<evidence type="ECO:0000312" key="14">
    <source>
        <dbReference type="WormBase" id="T08G5.5c"/>
    </source>
</evidence>
<gene>
    <name evidence="13" type="primary">vps-39</name>
    <name evidence="13" type="ORF">T08G5.5</name>
</gene>
<reference evidence="11" key="1">
    <citation type="journal article" date="1998" name="Science">
        <title>Genome sequence of the nematode C. elegans: a platform for investigating biology.</title>
        <authorList>
            <consortium name="The C. elegans sequencing consortium"/>
        </authorList>
    </citation>
    <scope>NUCLEOTIDE SEQUENCE [LARGE SCALE GENOMIC DNA]</scope>
    <source>
        <strain evidence="11">Bristol N2</strain>
    </source>
</reference>
<reference key="2">
    <citation type="journal article" date="2009" name="PLoS ONE">
        <title>CUTI-1: A novel tetraspan protein involved in C. elegans CUTicle formation and epithelial integrity.</title>
        <authorList>
            <person name="Fritz J.A."/>
            <person name="Behm C.A."/>
        </authorList>
    </citation>
    <scope>INTERACTION WITH CUTI-1</scope>
</reference>
<reference evidence="9" key="3">
    <citation type="journal article" date="2014" name="Mol. Biol. Cell">
        <title>Caenorhabditis elegans HOPS and CCZ-1 mediate trafficking to lysosome-related organelles independently of RAB-7 and SAND-1.</title>
        <authorList>
            <person name="Delahaye J.L."/>
            <person name="Foster O.K."/>
            <person name="Vine A."/>
            <person name="Saxton D.S."/>
            <person name="Curtin T.P."/>
            <person name="Somhegyi H."/>
            <person name="Salesky R."/>
            <person name="Hermann G.J."/>
        </authorList>
    </citation>
    <scope>FUNCTION</scope>
    <scope>DISRUPTION PHENOTYPE</scope>
</reference>
<reference evidence="9" key="4">
    <citation type="journal article" date="2014" name="Mol. Biol. Cell">
        <title>Loss of the Sec1/Munc18-family proteins VPS-33.2 and VPS-33.1 bypasses a block in endosome maturation in Caenorhabditis elegans.</title>
        <authorList>
            <person name="Solinger J.A."/>
            <person name="Spang A."/>
        </authorList>
    </citation>
    <scope>FUNCTION</scope>
    <scope>DISRUPTION PHENOTYPE</scope>
</reference>
<reference evidence="9" key="5">
    <citation type="journal article" date="2014" name="Autophagy">
        <title>Human GABARAP can restore autophagosome biogenesis in a C. elegans lgg-1 mutant.</title>
        <authorList>
            <person name="Jenzer C."/>
            <person name="Manil-Segalen M."/>
            <person name="Lefebvre C."/>
            <person name="Largeau C."/>
            <person name="Glatigny A."/>
            <person name="Legouis R."/>
        </authorList>
    </citation>
    <scope>FUNCTION</scope>
    <scope>DISRUPTION PHENOTYPE</scope>
</reference>
<reference evidence="9" key="6">
    <citation type="journal article" date="2014" name="Dev. Cell">
        <title>The C. elegans LC3 acts downstream of GABARAP to degrade autophagosomes by interacting with the HOPS subunit VPS39.</title>
        <authorList>
            <person name="Manil-Segalen M."/>
            <person name="Lefebvre C."/>
            <person name="Jenzer C."/>
            <person name="Trichet M."/>
            <person name="Boulogne C."/>
            <person name="Satiat-Jeunemaitre B."/>
            <person name="Legouis R."/>
        </authorList>
    </citation>
    <scope>FUNCTION</scope>
    <scope>INTERACTION WITH LGG-2</scope>
    <scope>DISRUPTION PHENOTYPE</scope>
</reference>
<keyword id="KW-0025">Alternative splicing</keyword>
<keyword id="KW-0072">Autophagy</keyword>
<keyword id="KW-0963">Cytoplasm</keyword>
<keyword id="KW-0967">Endosome</keyword>
<keyword id="KW-0458">Lysosome</keyword>
<keyword id="KW-0472">Membrane</keyword>
<keyword id="KW-1185">Reference proteome</keyword>
<protein>
    <recommendedName>
        <fullName evidence="9">Vacuolar protein sorting-associated protein 39 homolog</fullName>
    </recommendedName>
</protein>
<name>VPS39_CAEEL</name>
<feature type="chain" id="PRO_0000441276" description="Vacuolar protein sorting-associated protein 39 homolog" evidence="9">
    <location>
        <begin position="1"/>
        <end position="926"/>
    </location>
</feature>
<feature type="domain" description="CNH" evidence="2">
    <location>
        <begin position="15"/>
        <end position="306"/>
    </location>
</feature>
<feature type="repeat" description="CHCR" evidence="3">
    <location>
        <begin position="590"/>
        <end position="768"/>
    </location>
</feature>
<feature type="splice variant" id="VSP_059058" description="In isoform c." evidence="9">
    <location>
        <begin position="385"/>
        <end position="387"/>
    </location>
</feature>
<feature type="splice variant" id="VSP_059059" description="In isoform a and isoform c." evidence="9">
    <location>
        <begin position="659"/>
        <end position="661"/>
    </location>
</feature>
<comment type="function">
    <text evidence="1 5 6 7 8">Plays a role in vesicle-mediated protein trafficking to lysosomal compartments including the endocytic membrane transport and autophagic pathways (By similarity). Believed to act in part as a component of the putative HOPS endosomal tethering complex which is proposed to be involved in the rab-5-to-rab-7 endosome conversion probably implicating sand-1, and via binding SNAREs and SNARE complexes to mediate tethering and docking events during SNARE-mediated membrane fusion (PubMed:25273556). The HOPS complex is proposed to be recruited to rab-7 on the late endosomal membrane and to regulate late endocytic, phagocytic and autophagic traffic towards lysosomes (PubMed:24374177). Involved in homotypic vesicle fusions between late endosomes and in heterotypic fusions between late endosomes and lysosomes (By similarity). Required for fusion of endosomes (By similarity). In association with lgg-2 mediates the tethering of autophagosomes with lysosomes to form autolysosomes (PubMed:24374177, PubMed:25126728). Within the HOPS complex, contributes to the normal development of gut granules in embryonic and adult intestinal cells (PubMed:24501423).</text>
</comment>
<comment type="subunit">
    <text evidence="1 4 10">Probable core component of the homotypic fusion and vacuole protein sorting (HOPS) complex consisting of the core class C Vps proteins vps-11, vps-16, vps-18, and which further associates with vps-33.1, vps-39 and vps-41 (By similarity). May interact with lgg-2 (PubMed:24374177). Interacts with cuti-1 (PubMed:19357781).</text>
</comment>
<comment type="subcellular location">
    <subcellularLocation>
        <location evidence="1">Cytoplasm</location>
    </subcellularLocation>
    <subcellularLocation>
        <location evidence="1">Lysosome membrane</location>
        <topology evidence="1">Peripheral membrane protein</topology>
    </subcellularLocation>
    <subcellularLocation>
        <location evidence="1">Late endosome membrane</location>
        <topology evidence="1">Peripheral membrane protein</topology>
    </subcellularLocation>
    <subcellularLocation>
        <location evidence="1">Late endosome</location>
    </subcellularLocation>
    <subcellularLocation>
        <location evidence="1">Lysosome</location>
    </subcellularLocation>
</comment>
<comment type="alternative products">
    <event type="alternative splicing"/>
    <isoform>
        <id>Q1ZXS5-1</id>
        <name evidence="13">b</name>
        <sequence type="displayed"/>
    </isoform>
    <isoform>
        <id>Q1ZXS5-2</id>
        <name evidence="12">a</name>
        <sequence type="described" ref="VSP_059059"/>
    </isoform>
    <isoform>
        <id>Q1ZXS5-3</id>
        <name evidence="14">c</name>
        <sequence type="described" ref="VSP_059058 VSP_059059"/>
    </isoform>
</comment>
<comment type="disruption phenotype">
    <text evidence="5 6 7 8">In 1-cell to 20-cell stage embryos, there is defective autophagosome degradation with an accumulation of endosomes, lgg-1- and lgg-2-positive autophagosomes, amphisomes and paternal mitochondria close to the nuclei (PubMed:24374177, PubMed:25126728). Reduced number of gut granules in the adult intestine (PubMed:24501423). RNAi-mediated knockdown results in a reduced number of gut granules in embryonic intestinal cells (PubMed:24501423). RNAi-mediated knockdown results in the formation of large late endosomes/lysosomes, but with simultaneous expression of rab-5- and rab-7-positive vesicles on the basal side of gut cells (PubMed:25273556).</text>
</comment>
<comment type="similarity">
    <text evidence="9">Belongs to the VAM6/VPS39 family.</text>
</comment>
<dbReference type="EMBL" id="BX284605">
    <property type="protein sequence ID" value="CAB04720.1"/>
    <property type="molecule type" value="Genomic_DNA"/>
</dbReference>
<dbReference type="EMBL" id="BX284605">
    <property type="protein sequence ID" value="CAJ85769.1"/>
    <property type="molecule type" value="Genomic_DNA"/>
</dbReference>
<dbReference type="EMBL" id="BX284605">
    <property type="protein sequence ID" value="CAP16526.1"/>
    <property type="molecule type" value="Genomic_DNA"/>
</dbReference>
<dbReference type="PIR" id="T24712">
    <property type="entry name" value="T24712"/>
</dbReference>
<dbReference type="RefSeq" id="NP_001041163.1">
    <molecule id="Q1ZXS5-2"/>
    <property type="nucleotide sequence ID" value="NM_001047698.5"/>
</dbReference>
<dbReference type="RefSeq" id="NP_001041164.1">
    <molecule id="Q1ZXS5-1"/>
    <property type="nucleotide sequence ID" value="NM_001047699.5"/>
</dbReference>
<dbReference type="RefSeq" id="NP_001123010.1">
    <molecule id="Q1ZXS5-3"/>
    <property type="nucleotide sequence ID" value="NM_001129538.6"/>
</dbReference>
<dbReference type="SMR" id="Q1ZXS5"/>
<dbReference type="ComplexPortal" id="CPX-1136">
    <property type="entry name" value="HOPS tethering complex"/>
</dbReference>
<dbReference type="DIP" id="DIP-24817N"/>
<dbReference type="FunCoup" id="Q1ZXS5">
    <property type="interactions" value="3139"/>
</dbReference>
<dbReference type="IntAct" id="Q1ZXS5">
    <property type="interactions" value="29"/>
</dbReference>
<dbReference type="STRING" id="6239.T08G5.5b.1"/>
<dbReference type="PaxDb" id="6239-T08G5.5b"/>
<dbReference type="EnsemblMetazoa" id="T08G5.5a.1">
    <molecule id="Q1ZXS5-2"/>
    <property type="protein sequence ID" value="T08G5.5a.1"/>
    <property type="gene ID" value="WBGene00011625"/>
</dbReference>
<dbReference type="EnsemblMetazoa" id="T08G5.5b.1">
    <molecule id="Q1ZXS5-1"/>
    <property type="protein sequence ID" value="T08G5.5b.1"/>
    <property type="gene ID" value="WBGene00011625"/>
</dbReference>
<dbReference type="EnsemblMetazoa" id="T08G5.5c.1">
    <molecule id="Q1ZXS5-3"/>
    <property type="protein sequence ID" value="T08G5.5c.1"/>
    <property type="gene ID" value="WBGene00011625"/>
</dbReference>
<dbReference type="GeneID" id="179902"/>
<dbReference type="KEGG" id="cel:CELE_T08G5.5"/>
<dbReference type="UCSC" id="T08G5.5b">
    <property type="organism name" value="c. elegans"/>
</dbReference>
<dbReference type="AGR" id="WB:WBGene00011625"/>
<dbReference type="CTD" id="179902"/>
<dbReference type="WormBase" id="T08G5.5a">
    <molecule id="Q1ZXS5-2"/>
    <property type="protein sequence ID" value="CE18946"/>
    <property type="gene ID" value="WBGene00011625"/>
    <property type="gene designation" value="vps-39"/>
</dbReference>
<dbReference type="WormBase" id="T08G5.5b">
    <molecule id="Q1ZXS5-1"/>
    <property type="protein sequence ID" value="CE40122"/>
    <property type="gene ID" value="WBGene00011625"/>
    <property type="gene designation" value="vps-39"/>
</dbReference>
<dbReference type="WormBase" id="T08G5.5c">
    <molecule id="Q1ZXS5-3"/>
    <property type="protein sequence ID" value="CE41694"/>
    <property type="gene ID" value="WBGene00011625"/>
    <property type="gene designation" value="vps-39"/>
</dbReference>
<dbReference type="eggNOG" id="KOG2063">
    <property type="taxonomic scope" value="Eukaryota"/>
</dbReference>
<dbReference type="GeneTree" id="ENSGT00530000063596"/>
<dbReference type="InParanoid" id="Q1ZXS5"/>
<dbReference type="OMA" id="DETEMAR"/>
<dbReference type="OrthoDB" id="5325112at2759"/>
<dbReference type="PhylomeDB" id="Q1ZXS5"/>
<dbReference type="SignaLink" id="Q1ZXS5"/>
<dbReference type="PRO" id="PR:Q1ZXS5"/>
<dbReference type="Proteomes" id="UP000001940">
    <property type="component" value="Chromosome V"/>
</dbReference>
<dbReference type="Bgee" id="WBGene00011625">
    <property type="expression patterns" value="Expressed in germ line (C elegans) and 4 other cell types or tissues"/>
</dbReference>
<dbReference type="ExpressionAtlas" id="Q1ZXS5">
    <property type="expression patterns" value="baseline and differential"/>
</dbReference>
<dbReference type="GO" id="GO:0005737">
    <property type="term" value="C:cytoplasm"/>
    <property type="evidence" value="ECO:0000318"/>
    <property type="project" value="GO_Central"/>
</dbReference>
<dbReference type="GO" id="GO:0030897">
    <property type="term" value="C:HOPS complex"/>
    <property type="evidence" value="ECO:0000250"/>
    <property type="project" value="WormBase"/>
</dbReference>
<dbReference type="GO" id="GO:0031902">
    <property type="term" value="C:late endosome membrane"/>
    <property type="evidence" value="ECO:0007669"/>
    <property type="project" value="UniProtKB-SubCell"/>
</dbReference>
<dbReference type="GO" id="GO:0005765">
    <property type="term" value="C:lysosomal membrane"/>
    <property type="evidence" value="ECO:0007669"/>
    <property type="project" value="UniProtKB-SubCell"/>
</dbReference>
<dbReference type="GO" id="GO:0016020">
    <property type="term" value="C:membrane"/>
    <property type="evidence" value="ECO:0000318"/>
    <property type="project" value="GO_Central"/>
</dbReference>
<dbReference type="GO" id="GO:0006914">
    <property type="term" value="P:autophagy"/>
    <property type="evidence" value="ECO:0000318"/>
    <property type="project" value="GO_Central"/>
</dbReference>
<dbReference type="GO" id="GO:0034058">
    <property type="term" value="P:endosomal vesicle fusion"/>
    <property type="evidence" value="ECO:0000318"/>
    <property type="project" value="GO_Central"/>
</dbReference>
<dbReference type="GO" id="GO:0042144">
    <property type="term" value="P:vacuole fusion, non-autophagic"/>
    <property type="evidence" value="ECO:0000303"/>
    <property type="project" value="ComplexPortal"/>
</dbReference>
<dbReference type="FunFam" id="2.130.10.10:FF:002295">
    <property type="entry name" value="Vacuolar protein sorting-associated protein 39 homolog"/>
    <property type="match status" value="1"/>
</dbReference>
<dbReference type="Gene3D" id="2.130.10.10">
    <property type="entry name" value="YVTN repeat-like/Quinoprotein amine dehydrogenase"/>
    <property type="match status" value="1"/>
</dbReference>
<dbReference type="InterPro" id="IPR001180">
    <property type="entry name" value="CNH_dom"/>
</dbReference>
<dbReference type="InterPro" id="IPR032914">
    <property type="entry name" value="Vam6/VPS39/TRAP1"/>
</dbReference>
<dbReference type="InterPro" id="IPR019452">
    <property type="entry name" value="VPS39/TGF_beta_rcpt-assoc_1"/>
</dbReference>
<dbReference type="InterPro" id="IPR019453">
    <property type="entry name" value="VPS39/TGFA1_Znf"/>
</dbReference>
<dbReference type="InterPro" id="IPR015943">
    <property type="entry name" value="WD40/YVTN_repeat-like_dom_sf"/>
</dbReference>
<dbReference type="InterPro" id="IPR036322">
    <property type="entry name" value="WD40_repeat_dom_sf"/>
</dbReference>
<dbReference type="PANTHER" id="PTHR12894">
    <property type="entry name" value="CNH DOMAIN CONTAINING"/>
    <property type="match status" value="1"/>
</dbReference>
<dbReference type="PANTHER" id="PTHR12894:SF49">
    <property type="entry name" value="VAM6_VPS39-LIKE PROTEIN"/>
    <property type="match status" value="1"/>
</dbReference>
<dbReference type="Pfam" id="PF00780">
    <property type="entry name" value="CNH"/>
    <property type="match status" value="1"/>
</dbReference>
<dbReference type="Pfam" id="PF10366">
    <property type="entry name" value="Vps39_1"/>
    <property type="match status" value="1"/>
</dbReference>
<dbReference type="Pfam" id="PF10367">
    <property type="entry name" value="zf-Vps39_C"/>
    <property type="match status" value="1"/>
</dbReference>
<dbReference type="SUPFAM" id="SSF50978">
    <property type="entry name" value="WD40 repeat-like"/>
    <property type="match status" value="1"/>
</dbReference>
<dbReference type="PROSITE" id="PS50219">
    <property type="entry name" value="CNH"/>
    <property type="match status" value="1"/>
</dbReference>
<sequence>MYDAYTPCEVALRLPVEVTCLAFQESNQTLLAGGRAGHLYAYTISANRRGFELTNICKSFHKKAVMELKVCQREDLLLCVSDGQLMAHKLSDPEYKVETLIHKVKPVQTFARFSPKTSGDLYVIVSSRKKLYLFKWGEKDGHKEFIEVALDYNPVFLDTPTSIRCVGEMVFFSVRNEYFSMTMQKDKTTTSPSEGSTPEGWNGFVTRLLNFNCQPGIVPMIDRRRVAFVRNEIVVTTDIWGQRPANVLSDEYKFSEVPMQIVYDSPYLVGMLSKGRVEVRSIFDGQLVQTMSLPKAMTLCSGARGQVFVAALSDIWILDTSQNLRKNVSHLIQERHFELAIQLAENSNLFAEEQKLEIKKKAALNLFNQKKFDESFALFGEIKTDISEVLSIIRMFPELLPDGFQSMTGVVSDMPANDRMRALLALGSYLSEIRTEHAKHIELYNRLYSSGAAKKTDEDEKAKLLLTLRVVDTTLLKCYIKTKPMLVDSLIRLQSNACTFEDAKKILESEGRLRSLFILYETRKKHEMALDLFIDQSSRPDADPFFDDAIQQIVEYLQSLGNSNLPLILKYAKWVLAKNLEAGVQIFTSDETEMARNLNRKAVVEFLKSECPDALIPYLEHVIFKWEEPSSYFHETLLEFYVARVNTLFKDYVHAFPDAFSDENITRAGDEDGELGLYRKRLLKFLEVSHSYSPQTVLLQLAPHAFYEERALILGRLKQHEQALAIYVNTLKNVPAAEEYCRLYYNAHDETNSQVYLMLFRTLVHPNQQQLHSIPYHADSTPFGSYRDDVSEASTLVNSTSSYQPDVNTAIKILAKHADKIDTVGALNMLPATTPLRVVFSAINAVIQTTGRQASTRKMEKSVSQCAMSKKLERKNKAQSTKIIVNFSSECVVCEKKIAVSAFVRYPDGRLAHLYCHNDSQGGNRN</sequence>